<name>HIS8_PAEAT</name>
<organism>
    <name type="scientific">Paenarthrobacter aurescens (strain TC1)</name>
    <dbReference type="NCBI Taxonomy" id="290340"/>
    <lineage>
        <taxon>Bacteria</taxon>
        <taxon>Bacillati</taxon>
        <taxon>Actinomycetota</taxon>
        <taxon>Actinomycetes</taxon>
        <taxon>Micrococcales</taxon>
        <taxon>Micrococcaceae</taxon>
        <taxon>Paenarthrobacter</taxon>
    </lineage>
</organism>
<accession>A1R558</accession>
<sequence length="372" mass="39869">MSDQLERLDRLPLRTNLRGLSPYGAPQLDVPILLNVNENTHGVPADVQAAITEAVAAAATGLNRYPDREFTELREALAEYLGHGLSPDNIWAANGSNEVLQQILQAFGGPGRKALGFPPTYSMYPLLASGTDTEYVRGVRADDYGLDAQSAAAQVRETGANIVFLCSPNNPTGTGLSLDVVEAVYEAGEASQAIVIVDEAYHEFAHDNTPSALTLLPGRERLIVSRTMSKAFALAGARLGYMAAAPEVTDAIRLVRLPYHLSAVTQATALAALNHREALMADVEDIKVQRDRIVTELLRMGLKPAASDSNYVFFGGLEDPHTIWQGLLDAGVLIRDVGIPGHLRVTAGTEPETTAFLEALEALLDGTAPHRA</sequence>
<dbReference type="EC" id="2.6.1.9" evidence="1"/>
<dbReference type="EMBL" id="CP000474">
    <property type="protein sequence ID" value="ABM06601.1"/>
    <property type="molecule type" value="Genomic_DNA"/>
</dbReference>
<dbReference type="RefSeq" id="WP_011774315.1">
    <property type="nucleotide sequence ID" value="NC_008711.1"/>
</dbReference>
<dbReference type="SMR" id="A1R558"/>
<dbReference type="STRING" id="290340.AAur_1604"/>
<dbReference type="KEGG" id="aau:AAur_1604"/>
<dbReference type="eggNOG" id="COG0079">
    <property type="taxonomic scope" value="Bacteria"/>
</dbReference>
<dbReference type="HOGENOM" id="CLU_017584_3_1_11"/>
<dbReference type="OrthoDB" id="9809616at2"/>
<dbReference type="UniPathway" id="UPA00031">
    <property type="reaction ID" value="UER00012"/>
</dbReference>
<dbReference type="Proteomes" id="UP000000637">
    <property type="component" value="Chromosome"/>
</dbReference>
<dbReference type="GO" id="GO:0004400">
    <property type="term" value="F:histidinol-phosphate transaminase activity"/>
    <property type="evidence" value="ECO:0007669"/>
    <property type="project" value="UniProtKB-UniRule"/>
</dbReference>
<dbReference type="GO" id="GO:0030170">
    <property type="term" value="F:pyridoxal phosphate binding"/>
    <property type="evidence" value="ECO:0007669"/>
    <property type="project" value="InterPro"/>
</dbReference>
<dbReference type="GO" id="GO:0000105">
    <property type="term" value="P:L-histidine biosynthetic process"/>
    <property type="evidence" value="ECO:0007669"/>
    <property type="project" value="UniProtKB-UniRule"/>
</dbReference>
<dbReference type="CDD" id="cd00609">
    <property type="entry name" value="AAT_like"/>
    <property type="match status" value="1"/>
</dbReference>
<dbReference type="Gene3D" id="3.90.1150.10">
    <property type="entry name" value="Aspartate Aminotransferase, domain 1"/>
    <property type="match status" value="1"/>
</dbReference>
<dbReference type="Gene3D" id="3.40.640.10">
    <property type="entry name" value="Type I PLP-dependent aspartate aminotransferase-like (Major domain)"/>
    <property type="match status" value="1"/>
</dbReference>
<dbReference type="HAMAP" id="MF_01023">
    <property type="entry name" value="HisC_aminotrans_2"/>
    <property type="match status" value="1"/>
</dbReference>
<dbReference type="InterPro" id="IPR001917">
    <property type="entry name" value="Aminotrans_II_pyridoxalP_BS"/>
</dbReference>
<dbReference type="InterPro" id="IPR004839">
    <property type="entry name" value="Aminotransferase_I/II_large"/>
</dbReference>
<dbReference type="InterPro" id="IPR005861">
    <property type="entry name" value="HisP_aminotrans"/>
</dbReference>
<dbReference type="InterPro" id="IPR015424">
    <property type="entry name" value="PyrdxlP-dep_Trfase"/>
</dbReference>
<dbReference type="InterPro" id="IPR015421">
    <property type="entry name" value="PyrdxlP-dep_Trfase_major"/>
</dbReference>
<dbReference type="InterPro" id="IPR015422">
    <property type="entry name" value="PyrdxlP-dep_Trfase_small"/>
</dbReference>
<dbReference type="NCBIfam" id="TIGR01141">
    <property type="entry name" value="hisC"/>
    <property type="match status" value="1"/>
</dbReference>
<dbReference type="NCBIfam" id="NF002877">
    <property type="entry name" value="PRK03317.1"/>
    <property type="match status" value="1"/>
</dbReference>
<dbReference type="PANTHER" id="PTHR42885:SF2">
    <property type="entry name" value="HISTIDINOL-PHOSPHATE AMINOTRANSFERASE"/>
    <property type="match status" value="1"/>
</dbReference>
<dbReference type="PANTHER" id="PTHR42885">
    <property type="entry name" value="HISTIDINOL-PHOSPHATE AMINOTRANSFERASE-RELATED"/>
    <property type="match status" value="1"/>
</dbReference>
<dbReference type="Pfam" id="PF00155">
    <property type="entry name" value="Aminotran_1_2"/>
    <property type="match status" value="1"/>
</dbReference>
<dbReference type="SUPFAM" id="SSF53383">
    <property type="entry name" value="PLP-dependent transferases"/>
    <property type="match status" value="1"/>
</dbReference>
<dbReference type="PROSITE" id="PS00599">
    <property type="entry name" value="AA_TRANSFER_CLASS_2"/>
    <property type="match status" value="1"/>
</dbReference>
<evidence type="ECO:0000255" key="1">
    <source>
        <dbReference type="HAMAP-Rule" id="MF_01023"/>
    </source>
</evidence>
<reference key="1">
    <citation type="journal article" date="2006" name="PLoS Genet.">
        <title>Secrets of soil survival revealed by the genome sequence of Arthrobacter aurescens TC1.</title>
        <authorList>
            <person name="Mongodin E.F."/>
            <person name="Shapir N."/>
            <person name="Daugherty S.C."/>
            <person name="DeBoy R.T."/>
            <person name="Emerson J.B."/>
            <person name="Shvartzbeyn A."/>
            <person name="Radune D."/>
            <person name="Vamathevan J."/>
            <person name="Riggs F."/>
            <person name="Grinberg V."/>
            <person name="Khouri H.M."/>
            <person name="Wackett L.P."/>
            <person name="Nelson K.E."/>
            <person name="Sadowsky M.J."/>
        </authorList>
    </citation>
    <scope>NUCLEOTIDE SEQUENCE [LARGE SCALE GENOMIC DNA]</scope>
    <source>
        <strain>TC1</strain>
    </source>
</reference>
<keyword id="KW-0028">Amino-acid biosynthesis</keyword>
<keyword id="KW-0032">Aminotransferase</keyword>
<keyword id="KW-0368">Histidine biosynthesis</keyword>
<keyword id="KW-0663">Pyridoxal phosphate</keyword>
<keyword id="KW-0808">Transferase</keyword>
<gene>
    <name evidence="1" type="primary">hisC</name>
    <name type="ordered locus">AAur_1604</name>
</gene>
<feature type="chain" id="PRO_0000319742" description="Histidinol-phosphate aminotransferase">
    <location>
        <begin position="1"/>
        <end position="372"/>
    </location>
</feature>
<feature type="modified residue" description="N6-(pyridoxal phosphate)lysine" evidence="1">
    <location>
        <position position="230"/>
    </location>
</feature>
<comment type="catalytic activity">
    <reaction evidence="1">
        <text>L-histidinol phosphate + 2-oxoglutarate = 3-(imidazol-4-yl)-2-oxopropyl phosphate + L-glutamate</text>
        <dbReference type="Rhea" id="RHEA:23744"/>
        <dbReference type="ChEBI" id="CHEBI:16810"/>
        <dbReference type="ChEBI" id="CHEBI:29985"/>
        <dbReference type="ChEBI" id="CHEBI:57766"/>
        <dbReference type="ChEBI" id="CHEBI:57980"/>
        <dbReference type="EC" id="2.6.1.9"/>
    </reaction>
</comment>
<comment type="cofactor">
    <cofactor evidence="1">
        <name>pyridoxal 5'-phosphate</name>
        <dbReference type="ChEBI" id="CHEBI:597326"/>
    </cofactor>
</comment>
<comment type="pathway">
    <text evidence="1">Amino-acid biosynthesis; L-histidine biosynthesis; L-histidine from 5-phospho-alpha-D-ribose 1-diphosphate: step 7/9.</text>
</comment>
<comment type="subunit">
    <text evidence="1">Homodimer.</text>
</comment>
<comment type="similarity">
    <text evidence="1">Belongs to the class-II pyridoxal-phosphate-dependent aminotransferase family. Histidinol-phosphate aminotransferase subfamily.</text>
</comment>
<protein>
    <recommendedName>
        <fullName evidence="1">Histidinol-phosphate aminotransferase</fullName>
        <ecNumber evidence="1">2.6.1.9</ecNumber>
    </recommendedName>
    <alternativeName>
        <fullName evidence="1">Imidazole acetol-phosphate transaminase</fullName>
    </alternativeName>
</protein>
<proteinExistence type="inferred from homology"/>